<protein>
    <recommendedName>
        <fullName evidence="8">Multiple C2 and transmembrane domain-containing protein 1</fullName>
    </recommendedName>
</protein>
<proteinExistence type="evidence at protein level"/>
<name>MCTP1_RAT</name>
<sequence length="946" mass="106483">MEPRGAAAGEPEPAVSPSFQARLWKNLQLGVGKGKGGGGGRAGGPERRTAATPTPSLPPPKTTQDVGSTGSRWSGFKKRKQVLDRVFSSSQPNLCCSSPEPLEPGGAGRAEQGSTLRRRLREHLLPVAKGSSTAAGTVGVTPPGGRSPDSAPSSSASSSLSSSPQPPPRGDRIRDEGTRRGSPEAHLCHQKSSSLPGTACLEQLLEPAPPPAEPARRPAEPQSLQKGEELDCSQKINPVETSNADVPLADPGMYQLDITLRRGQSLAARDRGGTSDPYVKFKIGRKEVFRSKIIHKNLNPVWEEKACVLIDHLREPLYIKVFDYDFGLQDDFMGSAFLDLTQLELNRPTDVTLTLKDPHYPDHDLGIILLSVILTPKEGEPRDVTMLMRKSWKRSSKFQTQSLRLSDQHRKSHLWRGIVSITLIEGRDLKAMDSNGLSDPYVKFRLGHQKYKSKIMPKTLNPQWREQFDFHLYEERGGVMDITAWDKDAGKRDDFIGRCQVDLSSLSREQTHKLELQLEEGEGHLVLLVTLTASATVSISDLSVNSMEDHKEREEILKRYSPLRIFNNIKDVGFLQVKVIRAEGLMAADVTGKSDPFCVVELNNDRLLTHTVYKNLNPEWNKVFTFNIKDIHSVLEVTVYDEDRDRSADFLGRVAIPLLSIQNGEQKAYVLKNKQLTGPTKGVIHLEIDVIFNAVKASLRTLIPKERKYIEEENRLSKQLLLRNFIRTKRCVMVLVNAAYYVNSCFDWDSPPRSLAAFVLFLLVVWNFELYMIPLLLLLLLTWNYFLIISGKDNRQRDTVVEDMLEDEEEEDDRDDKDGEKKGFINKIYAIQEVCVSVQNILDEAASLGERVKNTFNWTVPFLSWLAIIALCVFTAILYFIPLRYIVLVWGINKFTKKLRSPYAIDNNELLDFLSRVPSDVQVVQYQELKPDHSHSPYKRKKNNLG</sequence>
<organism>
    <name type="scientific">Rattus norvegicus</name>
    <name type="common">Rat</name>
    <dbReference type="NCBI Taxonomy" id="10116"/>
    <lineage>
        <taxon>Eukaryota</taxon>
        <taxon>Metazoa</taxon>
        <taxon>Chordata</taxon>
        <taxon>Craniata</taxon>
        <taxon>Vertebrata</taxon>
        <taxon>Euteleostomi</taxon>
        <taxon>Mammalia</taxon>
        <taxon>Eutheria</taxon>
        <taxon>Euarchontoglires</taxon>
        <taxon>Glires</taxon>
        <taxon>Rodentia</taxon>
        <taxon>Myomorpha</taxon>
        <taxon>Muroidea</taxon>
        <taxon>Muridae</taxon>
        <taxon>Murinae</taxon>
        <taxon>Rattus</taxon>
    </lineage>
</organism>
<feature type="chain" id="PRO_0000441712" description="Multiple C2 and transmembrane domain-containing protein 1">
    <location>
        <begin position="1"/>
        <end position="946"/>
    </location>
</feature>
<feature type="transmembrane region" description="Helical" evidence="3">
    <location>
        <begin position="758"/>
        <end position="778"/>
    </location>
</feature>
<feature type="transmembrane region" description="Helical" evidence="3">
    <location>
        <begin position="861"/>
        <end position="881"/>
    </location>
</feature>
<feature type="domain" description="C2 1" evidence="4">
    <location>
        <begin position="235"/>
        <end position="353"/>
    </location>
</feature>
<feature type="domain" description="C2 2" evidence="4">
    <location>
        <begin position="399"/>
        <end position="516"/>
    </location>
</feature>
<feature type="domain" description="C2 3" evidence="4">
    <location>
        <begin position="550"/>
        <end position="671"/>
    </location>
</feature>
<feature type="region of interest" description="Disordered" evidence="5">
    <location>
        <begin position="28"/>
        <end position="193"/>
    </location>
</feature>
<feature type="region of interest" description="Disordered" evidence="5">
    <location>
        <begin position="205"/>
        <end position="229"/>
    </location>
</feature>
<feature type="compositionally biased region" description="Gly residues" evidence="5">
    <location>
        <begin position="31"/>
        <end position="43"/>
    </location>
</feature>
<feature type="compositionally biased region" description="Polar residues" evidence="5">
    <location>
        <begin position="87"/>
        <end position="96"/>
    </location>
</feature>
<feature type="compositionally biased region" description="Low complexity" evidence="5">
    <location>
        <begin position="143"/>
        <end position="163"/>
    </location>
</feature>
<feature type="compositionally biased region" description="Basic and acidic residues" evidence="5">
    <location>
        <begin position="169"/>
        <end position="187"/>
    </location>
</feature>
<feature type="binding site" evidence="4">
    <location>
        <position position="270"/>
    </location>
    <ligand>
        <name>Ca(2+)</name>
        <dbReference type="ChEBI" id="CHEBI:29108"/>
        <label>1</label>
    </ligand>
</feature>
<feature type="binding site" evidence="4">
    <location>
        <position position="270"/>
    </location>
    <ligand>
        <name>Ca(2+)</name>
        <dbReference type="ChEBI" id="CHEBI:29108"/>
        <label>2</label>
    </ligand>
</feature>
<feature type="binding site" evidence="4">
    <location>
        <position position="276"/>
    </location>
    <ligand>
        <name>Ca(2+)</name>
        <dbReference type="ChEBI" id="CHEBI:29108"/>
        <label>1</label>
    </ligand>
</feature>
<feature type="binding site" evidence="4">
    <location>
        <position position="323"/>
    </location>
    <ligand>
        <name>Ca(2+)</name>
        <dbReference type="ChEBI" id="CHEBI:29108"/>
        <label>1</label>
    </ligand>
</feature>
<feature type="binding site" evidence="4">
    <location>
        <position position="323"/>
    </location>
    <ligand>
        <name>Ca(2+)</name>
        <dbReference type="ChEBI" id="CHEBI:29108"/>
        <label>2</label>
    </ligand>
</feature>
<feature type="binding site" evidence="4">
    <location>
        <position position="325"/>
    </location>
    <ligand>
        <name>Ca(2+)</name>
        <dbReference type="ChEBI" id="CHEBI:29108"/>
        <label>1</label>
    </ligand>
</feature>
<feature type="binding site" evidence="4">
    <location>
        <position position="325"/>
    </location>
    <ligand>
        <name>Ca(2+)</name>
        <dbReference type="ChEBI" id="CHEBI:29108"/>
        <label>2</label>
    </ligand>
</feature>
<feature type="binding site" evidence="4">
    <location>
        <position position="331"/>
    </location>
    <ligand>
        <name>Ca(2+)</name>
        <dbReference type="ChEBI" id="CHEBI:29108"/>
        <label>2</label>
    </ligand>
</feature>
<feature type="binding site" evidence="4">
    <location>
        <position position="433"/>
    </location>
    <ligand>
        <name>Ca(2+)</name>
        <dbReference type="ChEBI" id="CHEBI:29108"/>
        <label>3</label>
    </ligand>
</feature>
<feature type="binding site" evidence="4">
    <location>
        <position position="433"/>
    </location>
    <ligand>
        <name>Ca(2+)</name>
        <dbReference type="ChEBI" id="CHEBI:29108"/>
        <label>4</label>
    </ligand>
</feature>
<feature type="binding site" evidence="4">
    <location>
        <position position="439"/>
    </location>
    <ligand>
        <name>Ca(2+)</name>
        <dbReference type="ChEBI" id="CHEBI:29108"/>
        <label>3</label>
    </ligand>
</feature>
<feature type="binding site" evidence="4">
    <location>
        <position position="486"/>
    </location>
    <ligand>
        <name>Ca(2+)</name>
        <dbReference type="ChEBI" id="CHEBI:29108"/>
        <label>3</label>
    </ligand>
</feature>
<feature type="binding site" evidence="4">
    <location>
        <position position="486"/>
    </location>
    <ligand>
        <name>Ca(2+)</name>
        <dbReference type="ChEBI" id="CHEBI:29108"/>
        <label>4</label>
    </ligand>
</feature>
<feature type="binding site" evidence="4">
    <location>
        <position position="488"/>
    </location>
    <ligand>
        <name>Ca(2+)</name>
        <dbReference type="ChEBI" id="CHEBI:29108"/>
        <label>3</label>
    </ligand>
</feature>
<feature type="binding site" evidence="4">
    <location>
        <position position="488"/>
    </location>
    <ligand>
        <name>Ca(2+)</name>
        <dbReference type="ChEBI" id="CHEBI:29108"/>
        <label>4</label>
    </ligand>
</feature>
<feature type="binding site" evidence="4">
    <location>
        <position position="494"/>
    </location>
    <ligand>
        <name>Ca(2+)</name>
        <dbReference type="ChEBI" id="CHEBI:29108"/>
        <label>4</label>
    </ligand>
</feature>
<feature type="binding site" evidence="4">
    <location>
        <position position="589"/>
    </location>
    <ligand>
        <name>Ca(2+)</name>
        <dbReference type="ChEBI" id="CHEBI:29108"/>
        <label>5</label>
    </ligand>
</feature>
<feature type="binding site" evidence="4">
    <location>
        <position position="589"/>
    </location>
    <ligand>
        <name>Ca(2+)</name>
        <dbReference type="ChEBI" id="CHEBI:29108"/>
        <label>6</label>
    </ligand>
</feature>
<feature type="binding site" evidence="4">
    <location>
        <position position="595"/>
    </location>
    <ligand>
        <name>Ca(2+)</name>
        <dbReference type="ChEBI" id="CHEBI:29108"/>
        <label>5</label>
    </ligand>
</feature>
<feature type="binding site" evidence="4">
    <location>
        <position position="641"/>
    </location>
    <ligand>
        <name>Ca(2+)</name>
        <dbReference type="ChEBI" id="CHEBI:29108"/>
        <label>5</label>
    </ligand>
</feature>
<feature type="binding site" evidence="4">
    <location>
        <position position="641"/>
    </location>
    <ligand>
        <name>Ca(2+)</name>
        <dbReference type="ChEBI" id="CHEBI:29108"/>
        <label>6</label>
    </ligand>
</feature>
<feature type="binding site" evidence="4">
    <location>
        <position position="643"/>
    </location>
    <ligand>
        <name>Ca(2+)</name>
        <dbReference type="ChEBI" id="CHEBI:29108"/>
        <label>5</label>
    </ligand>
</feature>
<feature type="binding site" evidence="4">
    <location>
        <position position="643"/>
    </location>
    <ligand>
        <name>Ca(2+)</name>
        <dbReference type="ChEBI" id="CHEBI:29108"/>
        <label>6</label>
    </ligand>
</feature>
<feature type="binding site" evidence="4">
    <location>
        <position position="649"/>
    </location>
    <ligand>
        <name>Ca(2+)</name>
        <dbReference type="ChEBI" id="CHEBI:29108"/>
        <label>6</label>
    </ligand>
</feature>
<feature type="splice variant" id="VSP_059094" description="In isoform 2.">
    <original>MEPRGAAAGEPEPAVSPSFQARLWKNLQLGVGKGKGGGGGRAGGPERRTAATPTPSLPPPKTTQDVGSTGSRWSGFKKRKQVLDRVFSSSQPNLCCSSPEPLEPGGAGRAEQGSTLRRRLREHLLPVAKGSSTAAGTVGVTPPGGRSPDSAPSSSASSSLSSSPQPPPRGDRIRDEGTRRGSPEAHLCHQKSSSLPGTACLEQLLEPAPPPAEPARRPAEPQSLQKGEELDCSQ</original>
    <variation>MLDSYRLKSFCNLPLVCHK</variation>
    <location>
        <begin position="1"/>
        <end position="234"/>
    </location>
</feature>
<evidence type="ECO:0000250" key="1">
    <source>
        <dbReference type="UniProtKB" id="A1ZBD6"/>
    </source>
</evidence>
<evidence type="ECO:0000250" key="2">
    <source>
        <dbReference type="UniProtKB" id="Q6DN14"/>
    </source>
</evidence>
<evidence type="ECO:0000255" key="3"/>
<evidence type="ECO:0000255" key="4">
    <source>
        <dbReference type="PROSITE-ProRule" id="PRU00041"/>
    </source>
</evidence>
<evidence type="ECO:0000256" key="5">
    <source>
        <dbReference type="SAM" id="MobiDB-lite"/>
    </source>
</evidence>
<evidence type="ECO:0000269" key="6">
    <source>
    </source>
</evidence>
<evidence type="ECO:0000303" key="7">
    <source>
    </source>
</evidence>
<evidence type="ECO:0000305" key="8"/>
<evidence type="ECO:0000312" key="9">
    <source>
        <dbReference type="RGD" id="1305199"/>
    </source>
</evidence>
<comment type="function">
    <text evidence="1 6">Calcium sensor which is essential for the stabilization of normal baseline neurotransmitter release and for the induction and long-term maintenance of presynaptic homeostatic plasticity (By similarity). Overexpression in cultured neurons significantly inhibits neuronal transferrin endocytosis, secretory vesicle retrieval, cell migration, and oxidative stress from glutamate toxicity (PubMed:26195140).</text>
</comment>
<comment type="cofactor">
    <cofactor evidence="4">
        <name>Ca(2+)</name>
        <dbReference type="ChEBI" id="CHEBI:29108"/>
    </cofactor>
    <text evidence="2">Binds Ca(2+) via the C2 domains in absence of phospholipids.</text>
</comment>
<comment type="subcellular location">
    <subcellularLocation>
        <location evidence="6">Cytoplasmic vesicle</location>
        <location evidence="6">Secretory vesicle</location>
        <location evidence="6">Synaptic vesicle membrane</location>
        <topology evidence="3">Multi-pass membrane protein</topology>
    </subcellularLocation>
    <subcellularLocation>
        <location evidence="6">Recycling endosome</location>
    </subcellularLocation>
    <subcellularLocation>
        <location evidence="1">Endoplasmic reticulum membrane</location>
    </subcellularLocation>
</comment>
<comment type="alternative products">
    <event type="alternative splicing"/>
    <isoform>
        <id>D4ABL6-1</id>
        <name>1</name>
        <name evidence="7">Mctp1L</name>
        <sequence type="displayed"/>
    </isoform>
    <isoform>
        <id>D4ABL6-2</id>
        <name>2</name>
        <name evidence="7">Mctp1S</name>
        <sequence type="described" ref="VSP_059094"/>
    </isoform>
    <text>Additional isoforms seem to exist.</text>
</comment>
<comment type="tissue specificity">
    <text evidence="6">Expressed in the brain and central nervous system (at protein level). Isoform 1 and isoform 2 are expressed in the brain, kidney, liver, heart, lung, skeletal muscle, testis and spleen. Isoform 2 shows a higher expression in the brain, heart and skeletal muscle.</text>
</comment>
<comment type="similarity">
    <text evidence="8">Belongs to the MCTP family.</text>
</comment>
<reference key="1">
    <citation type="journal article" date="2015" name="J. Neurochem.">
        <title>Multiple C2 domains transmembrane protein 1 is expressed in CNS neurons and possibly regulates cellular vesicle retrieval and oxidative stress.</title>
        <authorList>
            <person name="Qiu L."/>
            <person name="Yu H."/>
            <person name="Liang F."/>
        </authorList>
    </citation>
    <scope>NUCLEOTIDE SEQUENCE [MRNA] (ISOFORMS 1 AND 2)</scope>
    <scope>FUNCTION</scope>
    <scope>SUBCELLULAR LOCATION</scope>
    <scope>TISSUE SPECIFICITY</scope>
</reference>
<reference key="2">
    <citation type="journal article" date="2004" name="Nature">
        <title>Genome sequence of the Brown Norway rat yields insights into mammalian evolution.</title>
        <authorList>
            <person name="Gibbs R.A."/>
            <person name="Weinstock G.M."/>
            <person name="Metzker M.L."/>
            <person name="Muzny D.M."/>
            <person name="Sodergren E.J."/>
            <person name="Scherer S."/>
            <person name="Scott G."/>
            <person name="Steffen D."/>
            <person name="Worley K.C."/>
            <person name="Burch P.E."/>
            <person name="Okwuonu G."/>
            <person name="Hines S."/>
            <person name="Lewis L."/>
            <person name="Deramo C."/>
            <person name="Delgado O."/>
            <person name="Dugan-Rocha S."/>
            <person name="Miner G."/>
            <person name="Morgan M."/>
            <person name="Hawes A."/>
            <person name="Gill R."/>
            <person name="Holt R.A."/>
            <person name="Adams M.D."/>
            <person name="Amanatides P.G."/>
            <person name="Baden-Tillson H."/>
            <person name="Barnstead M."/>
            <person name="Chin S."/>
            <person name="Evans C.A."/>
            <person name="Ferriera S."/>
            <person name="Fosler C."/>
            <person name="Glodek A."/>
            <person name="Gu Z."/>
            <person name="Jennings D."/>
            <person name="Kraft C.L."/>
            <person name="Nguyen T."/>
            <person name="Pfannkoch C.M."/>
            <person name="Sitter C."/>
            <person name="Sutton G.G."/>
            <person name="Venter J.C."/>
            <person name="Woodage T."/>
            <person name="Smith D."/>
            <person name="Lee H.-M."/>
            <person name="Gustafson E."/>
            <person name="Cahill P."/>
            <person name="Kana A."/>
            <person name="Doucette-Stamm L."/>
            <person name="Weinstock K."/>
            <person name="Fechtel K."/>
            <person name="Weiss R.B."/>
            <person name="Dunn D.M."/>
            <person name="Green E.D."/>
            <person name="Blakesley R.W."/>
            <person name="Bouffard G.G."/>
            <person name="De Jong P.J."/>
            <person name="Osoegawa K."/>
            <person name="Zhu B."/>
            <person name="Marra M."/>
            <person name="Schein J."/>
            <person name="Bosdet I."/>
            <person name="Fjell C."/>
            <person name="Jones S."/>
            <person name="Krzywinski M."/>
            <person name="Mathewson C."/>
            <person name="Siddiqui A."/>
            <person name="Wye N."/>
            <person name="McPherson J."/>
            <person name="Zhao S."/>
            <person name="Fraser C.M."/>
            <person name="Shetty J."/>
            <person name="Shatsman S."/>
            <person name="Geer K."/>
            <person name="Chen Y."/>
            <person name="Abramzon S."/>
            <person name="Nierman W.C."/>
            <person name="Havlak P.H."/>
            <person name="Chen R."/>
            <person name="Durbin K.J."/>
            <person name="Egan A."/>
            <person name="Ren Y."/>
            <person name="Song X.-Z."/>
            <person name="Li B."/>
            <person name="Liu Y."/>
            <person name="Qin X."/>
            <person name="Cawley S."/>
            <person name="Cooney A.J."/>
            <person name="D'Souza L.M."/>
            <person name="Martin K."/>
            <person name="Wu J.Q."/>
            <person name="Gonzalez-Garay M.L."/>
            <person name="Jackson A.R."/>
            <person name="Kalafus K.J."/>
            <person name="McLeod M.P."/>
            <person name="Milosavljevic A."/>
            <person name="Virk D."/>
            <person name="Volkov A."/>
            <person name="Wheeler D.A."/>
            <person name="Zhang Z."/>
            <person name="Bailey J.A."/>
            <person name="Eichler E.E."/>
            <person name="Tuzun E."/>
            <person name="Birney E."/>
            <person name="Mongin E."/>
            <person name="Ureta-Vidal A."/>
            <person name="Woodwark C."/>
            <person name="Zdobnov E."/>
            <person name="Bork P."/>
            <person name="Suyama M."/>
            <person name="Torrents D."/>
            <person name="Alexandersson M."/>
            <person name="Trask B.J."/>
            <person name="Young J.M."/>
            <person name="Huang H."/>
            <person name="Wang H."/>
            <person name="Xing H."/>
            <person name="Daniels S."/>
            <person name="Gietzen D."/>
            <person name="Schmidt J."/>
            <person name="Stevens K."/>
            <person name="Vitt U."/>
            <person name="Wingrove J."/>
            <person name="Camara F."/>
            <person name="Mar Alba M."/>
            <person name="Abril J.F."/>
            <person name="Guigo R."/>
            <person name="Smit A."/>
            <person name="Dubchak I."/>
            <person name="Rubin E.M."/>
            <person name="Couronne O."/>
            <person name="Poliakov A."/>
            <person name="Huebner N."/>
            <person name="Ganten D."/>
            <person name="Goesele C."/>
            <person name="Hummel O."/>
            <person name="Kreitler T."/>
            <person name="Lee Y.-A."/>
            <person name="Monti J."/>
            <person name="Schulz H."/>
            <person name="Zimdahl H."/>
            <person name="Himmelbauer H."/>
            <person name="Lehrach H."/>
            <person name="Jacob H.J."/>
            <person name="Bromberg S."/>
            <person name="Gullings-Handley J."/>
            <person name="Jensen-Seaman M.I."/>
            <person name="Kwitek A.E."/>
            <person name="Lazar J."/>
            <person name="Pasko D."/>
            <person name="Tonellato P.J."/>
            <person name="Twigger S."/>
            <person name="Ponting C.P."/>
            <person name="Duarte J.M."/>
            <person name="Rice S."/>
            <person name="Goodstadt L."/>
            <person name="Beatson S.A."/>
            <person name="Emes R.D."/>
            <person name="Winter E.E."/>
            <person name="Webber C."/>
            <person name="Brandt P."/>
            <person name="Nyakatura G."/>
            <person name="Adetobi M."/>
            <person name="Chiaromonte F."/>
            <person name="Elnitski L."/>
            <person name="Eswara P."/>
            <person name="Hardison R.C."/>
            <person name="Hou M."/>
            <person name="Kolbe D."/>
            <person name="Makova K."/>
            <person name="Miller W."/>
            <person name="Nekrutenko A."/>
            <person name="Riemer C."/>
            <person name="Schwartz S."/>
            <person name="Taylor J."/>
            <person name="Yang S."/>
            <person name="Zhang Y."/>
            <person name="Lindpaintner K."/>
            <person name="Andrews T.D."/>
            <person name="Caccamo M."/>
            <person name="Clamp M."/>
            <person name="Clarke L."/>
            <person name="Curwen V."/>
            <person name="Durbin R.M."/>
            <person name="Eyras E."/>
            <person name="Searle S.M."/>
            <person name="Cooper G.M."/>
            <person name="Batzoglou S."/>
            <person name="Brudno M."/>
            <person name="Sidow A."/>
            <person name="Stone E.A."/>
            <person name="Payseur B.A."/>
            <person name="Bourque G."/>
            <person name="Lopez-Otin C."/>
            <person name="Puente X.S."/>
            <person name="Chakrabarti K."/>
            <person name="Chatterji S."/>
            <person name="Dewey C."/>
            <person name="Pachter L."/>
            <person name="Bray N."/>
            <person name="Yap V.B."/>
            <person name="Caspi A."/>
            <person name="Tesler G."/>
            <person name="Pevzner P.A."/>
            <person name="Haussler D."/>
            <person name="Roskin K.M."/>
            <person name="Baertsch R."/>
            <person name="Clawson H."/>
            <person name="Furey T.S."/>
            <person name="Hinrichs A.S."/>
            <person name="Karolchik D."/>
            <person name="Kent W.J."/>
            <person name="Rosenbloom K.R."/>
            <person name="Trumbower H."/>
            <person name="Weirauch M."/>
            <person name="Cooper D.N."/>
            <person name="Stenson P.D."/>
            <person name="Ma B."/>
            <person name="Brent M."/>
            <person name="Arumugam M."/>
            <person name="Shteynberg D."/>
            <person name="Copley R.R."/>
            <person name="Taylor M.S."/>
            <person name="Riethman H."/>
            <person name="Mudunuri U."/>
            <person name="Peterson J."/>
            <person name="Guyer M."/>
            <person name="Felsenfeld A."/>
            <person name="Old S."/>
            <person name="Mockrin S."/>
            <person name="Collins F.S."/>
        </authorList>
    </citation>
    <scope>NUCLEOTIDE SEQUENCE [LARGE SCALE GENOMIC DNA]</scope>
    <source>
        <strain>Brown Norway</strain>
    </source>
</reference>
<dbReference type="EMBL" id="AABR07007350">
    <property type="status" value="NOT_ANNOTATED_CDS"/>
    <property type="molecule type" value="Genomic_DNA"/>
</dbReference>
<dbReference type="EMBL" id="AABR07072675">
    <property type="status" value="NOT_ANNOTATED_CDS"/>
    <property type="molecule type" value="Genomic_DNA"/>
</dbReference>
<dbReference type="EMBL" id="AABR07072676">
    <property type="status" value="NOT_ANNOTATED_CDS"/>
    <property type="molecule type" value="Genomic_DNA"/>
</dbReference>
<dbReference type="EMBL" id="AABR07072677">
    <property type="status" value="NOT_ANNOTATED_CDS"/>
    <property type="molecule type" value="Genomic_DNA"/>
</dbReference>
<dbReference type="EMBL" id="AC097940">
    <property type="status" value="NOT_ANNOTATED_CDS"/>
    <property type="molecule type" value="Genomic_DNA"/>
</dbReference>
<dbReference type="EMBL" id="AC103536">
    <property type="status" value="NOT_ANNOTATED_CDS"/>
    <property type="molecule type" value="Genomic_DNA"/>
</dbReference>
<dbReference type="EMBL" id="AC120719">
    <property type="status" value="NOT_ANNOTATED_CDS"/>
    <property type="molecule type" value="Genomic_DNA"/>
</dbReference>
<dbReference type="EMBL" id="AC125565">
    <property type="status" value="NOT_ANNOTATED_CDS"/>
    <property type="molecule type" value="Genomic_DNA"/>
</dbReference>
<dbReference type="RefSeq" id="NP_001363863.1">
    <molecule id="D4ABL6-1"/>
    <property type="nucleotide sequence ID" value="NM_001376934.1"/>
</dbReference>
<dbReference type="RefSeq" id="XP_017446641.1">
    <property type="nucleotide sequence ID" value="XM_017591152.1"/>
</dbReference>
<dbReference type="RefSeq" id="XP_017449722.1">
    <property type="nucleotide sequence ID" value="XM_017594233.1"/>
</dbReference>
<dbReference type="RefSeq" id="XP_063137767.1">
    <molecule id="D4ABL6-2"/>
    <property type="nucleotide sequence ID" value="XM_063281697.1"/>
</dbReference>
<dbReference type="SMR" id="D4ABL6"/>
<dbReference type="FunCoup" id="D4ABL6">
    <property type="interactions" value="1684"/>
</dbReference>
<dbReference type="STRING" id="10116.ENSRNOP00000076318"/>
<dbReference type="GlyGen" id="D4ABL6">
    <property type="glycosylation" value="2 sites"/>
</dbReference>
<dbReference type="PhosphoSitePlus" id="D4ABL6"/>
<dbReference type="PaxDb" id="10116-ENSRNOP00000017828"/>
<dbReference type="Ensembl" id="ENSRNOT00000093593.2">
    <molecule id="D4ABL6-1"/>
    <property type="protein sequence ID" value="ENSRNOP00000076318.1"/>
    <property type="gene ID" value="ENSRNOG00000013282.10"/>
</dbReference>
<dbReference type="GeneID" id="309928"/>
<dbReference type="AGR" id="RGD:1305199"/>
<dbReference type="RGD" id="1305199">
    <property type="gene designation" value="Mctp1"/>
</dbReference>
<dbReference type="eggNOG" id="KOG1030">
    <property type="taxonomic scope" value="Eukaryota"/>
</dbReference>
<dbReference type="GeneTree" id="ENSGT00940000156031"/>
<dbReference type="HOGENOM" id="CLU_011170_0_1_1"/>
<dbReference type="InParanoid" id="D4ABL6"/>
<dbReference type="OMA" id="DCGPTLE"/>
<dbReference type="OrthoDB" id="5973539at2759"/>
<dbReference type="TreeFam" id="TF323373"/>
<dbReference type="PRO" id="PR:D4ABL6"/>
<dbReference type="Proteomes" id="UP000002494">
    <property type="component" value="Chromosome 2"/>
</dbReference>
<dbReference type="Bgee" id="ENSRNOG00000013282">
    <property type="expression patterns" value="Expressed in cerebellum and 15 other cell types or tissues"/>
</dbReference>
<dbReference type="ExpressionAtlas" id="D4ABL6">
    <property type="expression patterns" value="baseline and differential"/>
</dbReference>
<dbReference type="GO" id="GO:0005789">
    <property type="term" value="C:endoplasmic reticulum membrane"/>
    <property type="evidence" value="ECO:0000250"/>
    <property type="project" value="UniProtKB"/>
</dbReference>
<dbReference type="GO" id="GO:0016020">
    <property type="term" value="C:membrane"/>
    <property type="evidence" value="ECO:0000266"/>
    <property type="project" value="RGD"/>
</dbReference>
<dbReference type="GO" id="GO:0055037">
    <property type="term" value="C:recycling endosome"/>
    <property type="evidence" value="ECO:0000314"/>
    <property type="project" value="UniProtKB"/>
</dbReference>
<dbReference type="GO" id="GO:0030672">
    <property type="term" value="C:synaptic vesicle membrane"/>
    <property type="evidence" value="ECO:0000314"/>
    <property type="project" value="UniProtKB"/>
</dbReference>
<dbReference type="GO" id="GO:0005509">
    <property type="term" value="F:calcium ion binding"/>
    <property type="evidence" value="ECO:0000250"/>
    <property type="project" value="UniProtKB"/>
</dbReference>
<dbReference type="GO" id="GO:0030336">
    <property type="term" value="P:negative regulation of cell migration"/>
    <property type="evidence" value="ECO:0000314"/>
    <property type="project" value="UniProtKB"/>
</dbReference>
<dbReference type="GO" id="GO:0045806">
    <property type="term" value="P:negative regulation of endocytosis"/>
    <property type="evidence" value="ECO:0000314"/>
    <property type="project" value="UniProtKB"/>
</dbReference>
<dbReference type="GO" id="GO:1902883">
    <property type="term" value="P:negative regulation of response to oxidative stress"/>
    <property type="evidence" value="ECO:0000314"/>
    <property type="project" value="UniProtKB"/>
</dbReference>
<dbReference type="GO" id="GO:0048168">
    <property type="term" value="P:regulation of neuronal synaptic plasticity"/>
    <property type="evidence" value="ECO:0000250"/>
    <property type="project" value="UniProtKB"/>
</dbReference>
<dbReference type="GO" id="GO:0046928">
    <property type="term" value="P:regulation of neurotransmitter secretion"/>
    <property type="evidence" value="ECO:0000250"/>
    <property type="project" value="UniProtKB"/>
</dbReference>
<dbReference type="CDD" id="cd04042">
    <property type="entry name" value="C2A_MCTP_PRT"/>
    <property type="match status" value="1"/>
</dbReference>
<dbReference type="CDD" id="cd08376">
    <property type="entry name" value="C2B_MCTP_PRT"/>
    <property type="match status" value="1"/>
</dbReference>
<dbReference type="CDD" id="cd08377">
    <property type="entry name" value="C2C_MCTP_PRT"/>
    <property type="match status" value="1"/>
</dbReference>
<dbReference type="FunFam" id="2.60.40.150:FF:000050">
    <property type="entry name" value="Multiple C2 and transmembrane domain containing 1"/>
    <property type="match status" value="1"/>
</dbReference>
<dbReference type="FunFam" id="2.60.40.150:FF:000068">
    <property type="entry name" value="multiple C2 and transmembrane domain-containing protein 1 isoform X2"/>
    <property type="match status" value="1"/>
</dbReference>
<dbReference type="FunFam" id="2.60.40.150:FF:000019">
    <property type="entry name" value="Multiple C2 and transmembrane domain-containing protein 2 isoform 1"/>
    <property type="match status" value="1"/>
</dbReference>
<dbReference type="Gene3D" id="2.60.40.150">
    <property type="entry name" value="C2 domain"/>
    <property type="match status" value="3"/>
</dbReference>
<dbReference type="InterPro" id="IPR000008">
    <property type="entry name" value="C2_dom"/>
</dbReference>
<dbReference type="InterPro" id="IPR035892">
    <property type="entry name" value="C2_domain_sf"/>
</dbReference>
<dbReference type="PANTHER" id="PTHR45911">
    <property type="entry name" value="C2 DOMAIN-CONTAINING PROTEIN"/>
    <property type="match status" value="1"/>
</dbReference>
<dbReference type="PANTHER" id="PTHR45911:SF3">
    <property type="entry name" value="DYSFERLIN-RELATED"/>
    <property type="match status" value="1"/>
</dbReference>
<dbReference type="Pfam" id="PF00168">
    <property type="entry name" value="C2"/>
    <property type="match status" value="3"/>
</dbReference>
<dbReference type="PRINTS" id="PR00360">
    <property type="entry name" value="C2DOMAIN"/>
</dbReference>
<dbReference type="SMART" id="SM00239">
    <property type="entry name" value="C2"/>
    <property type="match status" value="3"/>
</dbReference>
<dbReference type="SUPFAM" id="SSF49562">
    <property type="entry name" value="C2 domain (Calcium/lipid-binding domain, CaLB)"/>
    <property type="match status" value="3"/>
</dbReference>
<dbReference type="PROSITE" id="PS50004">
    <property type="entry name" value="C2"/>
    <property type="match status" value="3"/>
</dbReference>
<gene>
    <name evidence="9" type="primary">Mctp1</name>
</gene>
<keyword id="KW-0025">Alternative splicing</keyword>
<keyword id="KW-0106">Calcium</keyword>
<keyword id="KW-0968">Cytoplasmic vesicle</keyword>
<keyword id="KW-0256">Endoplasmic reticulum</keyword>
<keyword id="KW-0967">Endosome</keyword>
<keyword id="KW-0472">Membrane</keyword>
<keyword id="KW-0479">Metal-binding</keyword>
<keyword id="KW-1185">Reference proteome</keyword>
<keyword id="KW-0677">Repeat</keyword>
<keyword id="KW-0770">Synapse</keyword>
<keyword id="KW-0812">Transmembrane</keyword>
<keyword id="KW-1133">Transmembrane helix</keyword>
<accession>D4ABL6</accession>
<accession>A0A1W2Q6L3</accession>